<gene>
    <name evidence="1" type="primary">atpA</name>
    <name type="ordered locus">HP_1134</name>
</gene>
<protein>
    <recommendedName>
        <fullName evidence="1">ATP synthase subunit alpha</fullName>
        <ecNumber evidence="1">7.1.2.2</ecNumber>
    </recommendedName>
    <alternativeName>
        <fullName evidence="1">ATP synthase F1 sector subunit alpha</fullName>
    </alternativeName>
    <alternativeName>
        <fullName evidence="1">F-ATPase subunit alpha</fullName>
    </alternativeName>
</protein>
<feature type="chain" id="PRO_0000144330" description="ATP synthase subunit alpha">
    <location>
        <begin position="1"/>
        <end position="503"/>
    </location>
</feature>
<feature type="binding site" evidence="1">
    <location>
        <begin position="170"/>
        <end position="177"/>
    </location>
    <ligand>
        <name>ATP</name>
        <dbReference type="ChEBI" id="CHEBI:30616"/>
    </ligand>
</feature>
<feature type="site" description="Required for activity" evidence="1">
    <location>
        <position position="363"/>
    </location>
</feature>
<comment type="function">
    <text evidence="1">Produces ATP from ADP in the presence of a proton gradient across the membrane. The alpha chain is a regulatory subunit.</text>
</comment>
<comment type="catalytic activity">
    <reaction evidence="1">
        <text>ATP + H2O + 4 H(+)(in) = ADP + phosphate + 5 H(+)(out)</text>
        <dbReference type="Rhea" id="RHEA:57720"/>
        <dbReference type="ChEBI" id="CHEBI:15377"/>
        <dbReference type="ChEBI" id="CHEBI:15378"/>
        <dbReference type="ChEBI" id="CHEBI:30616"/>
        <dbReference type="ChEBI" id="CHEBI:43474"/>
        <dbReference type="ChEBI" id="CHEBI:456216"/>
        <dbReference type="EC" id="7.1.2.2"/>
    </reaction>
</comment>
<comment type="subunit">
    <text evidence="1">F-type ATPases have 2 components, CF(1) - the catalytic core - and CF(0) - the membrane proton channel. CF(1) has five subunits: alpha(3), beta(3), gamma(1), delta(1), epsilon(1). CF(0) has three main subunits: a(1), b(2) and c(9-12). The alpha and beta chains form an alternating ring which encloses part of the gamma chain. CF(1) is attached to CF(0) by a central stalk formed by the gamma and epsilon chains, while a peripheral stalk is formed by the delta and b chains.</text>
</comment>
<comment type="subcellular location">
    <subcellularLocation>
        <location evidence="1">Cell inner membrane</location>
        <topology evidence="1">Peripheral membrane protein</topology>
    </subcellularLocation>
</comment>
<comment type="similarity">
    <text evidence="1">Belongs to the ATPase alpha/beta chains family.</text>
</comment>
<organism>
    <name type="scientific">Helicobacter pylori (strain ATCC 700392 / 26695)</name>
    <name type="common">Campylobacter pylori</name>
    <dbReference type="NCBI Taxonomy" id="85962"/>
    <lineage>
        <taxon>Bacteria</taxon>
        <taxon>Pseudomonadati</taxon>
        <taxon>Campylobacterota</taxon>
        <taxon>Epsilonproteobacteria</taxon>
        <taxon>Campylobacterales</taxon>
        <taxon>Helicobacteraceae</taxon>
        <taxon>Helicobacter</taxon>
    </lineage>
</organism>
<sequence>MSQLKLEEISSVIEEKIKNFELDCDMAEVGKVVSYADGVAKVYGLNGVMSYEVLEFETGDKGVAANLEEDSVGVIVFGFGNNIKEGTSVKRTKSLMKVPVGDAVVGRVLNALGEPIDGKGEIETNEFSLIEQKAPGIMDRKSVHEPLQTGIKAIDALVPIGRGQRELIIGDKQTGKTTVAIDAIINQKGQNVICIYVAIGQKESTVAQVVRKLEEYGAMEYSVVINASASDSAAMQYLAPYSGVAMGEYFRDHARHALIIYDDLSKHAVAYREISLILRRPPGREAFPGDVFYIHSRLLERAAKLCDEKGAGSLTALPIVETQAGDVSAYIPTNIISITDGQIFLETDLFYSGIRPAINVGLSVSRVGGAAQIKATKQVSGTLRLDLAQYRELQAFTQFASDLDEASKKQLERGQRMVEVLKQAPYSPLPIEKQVVIIYAGAKGFLDSVSVKKVVDFEEQLHPFLEAKYPQVLEEIHTKKALDKDLEAMLRKVLEEFKLTYSE</sequence>
<name>ATPA_HELPY</name>
<evidence type="ECO:0000255" key="1">
    <source>
        <dbReference type="HAMAP-Rule" id="MF_01346"/>
    </source>
</evidence>
<proteinExistence type="inferred from homology"/>
<reference key="1">
    <citation type="journal article" date="1997" name="Nature">
        <title>The complete genome sequence of the gastric pathogen Helicobacter pylori.</title>
        <authorList>
            <person name="Tomb J.-F."/>
            <person name="White O."/>
            <person name="Kerlavage A.R."/>
            <person name="Clayton R.A."/>
            <person name="Sutton G.G."/>
            <person name="Fleischmann R.D."/>
            <person name="Ketchum K.A."/>
            <person name="Klenk H.-P."/>
            <person name="Gill S.R."/>
            <person name="Dougherty B.A."/>
            <person name="Nelson K.E."/>
            <person name="Quackenbush J."/>
            <person name="Zhou L."/>
            <person name="Kirkness E.F."/>
            <person name="Peterson S.N."/>
            <person name="Loftus B.J."/>
            <person name="Richardson D.L."/>
            <person name="Dodson R.J."/>
            <person name="Khalak H.G."/>
            <person name="Glodek A."/>
            <person name="McKenney K."/>
            <person name="FitzGerald L.M."/>
            <person name="Lee N."/>
            <person name="Adams M.D."/>
            <person name="Hickey E.K."/>
            <person name="Berg D.E."/>
            <person name="Gocayne J.D."/>
            <person name="Utterback T.R."/>
            <person name="Peterson J.D."/>
            <person name="Kelley J.M."/>
            <person name="Cotton M.D."/>
            <person name="Weidman J.F."/>
            <person name="Fujii C."/>
            <person name="Bowman C."/>
            <person name="Watthey L."/>
            <person name="Wallin E."/>
            <person name="Hayes W.S."/>
            <person name="Borodovsky M."/>
            <person name="Karp P.D."/>
            <person name="Smith H.O."/>
            <person name="Fraser C.M."/>
            <person name="Venter J.C."/>
        </authorList>
    </citation>
    <scope>NUCLEOTIDE SEQUENCE [LARGE SCALE GENOMIC DNA]</scope>
    <source>
        <strain>ATCC 700392 / 26695</strain>
    </source>
</reference>
<accession>P55987</accession>
<keyword id="KW-0066">ATP synthesis</keyword>
<keyword id="KW-0067">ATP-binding</keyword>
<keyword id="KW-0997">Cell inner membrane</keyword>
<keyword id="KW-1003">Cell membrane</keyword>
<keyword id="KW-0139">CF(1)</keyword>
<keyword id="KW-0375">Hydrogen ion transport</keyword>
<keyword id="KW-0406">Ion transport</keyword>
<keyword id="KW-0472">Membrane</keyword>
<keyword id="KW-0547">Nucleotide-binding</keyword>
<keyword id="KW-1185">Reference proteome</keyword>
<keyword id="KW-1278">Translocase</keyword>
<keyword id="KW-0813">Transport</keyword>
<dbReference type="EC" id="7.1.2.2" evidence="1"/>
<dbReference type="EMBL" id="AE000511">
    <property type="protein sequence ID" value="AAD08176.1"/>
    <property type="molecule type" value="Genomic_DNA"/>
</dbReference>
<dbReference type="PIR" id="F64661">
    <property type="entry name" value="F64661"/>
</dbReference>
<dbReference type="RefSeq" id="NP_207925.1">
    <property type="nucleotide sequence ID" value="NC_000915.1"/>
</dbReference>
<dbReference type="RefSeq" id="WP_000080506.1">
    <property type="nucleotide sequence ID" value="NC_018939.1"/>
</dbReference>
<dbReference type="SMR" id="P55987"/>
<dbReference type="FunCoup" id="P55987">
    <property type="interactions" value="288"/>
</dbReference>
<dbReference type="IntAct" id="P55987">
    <property type="interactions" value="1"/>
</dbReference>
<dbReference type="MINT" id="P55987"/>
<dbReference type="STRING" id="85962.HP_1134"/>
<dbReference type="PaxDb" id="85962-C694_05850"/>
<dbReference type="EnsemblBacteria" id="AAD08176">
    <property type="protein sequence ID" value="AAD08176"/>
    <property type="gene ID" value="HP_1134"/>
</dbReference>
<dbReference type="KEGG" id="heo:C694_05850"/>
<dbReference type="KEGG" id="hpy:HP_1134"/>
<dbReference type="PATRIC" id="fig|85962.47.peg.1216"/>
<dbReference type="eggNOG" id="COG0056">
    <property type="taxonomic scope" value="Bacteria"/>
</dbReference>
<dbReference type="InParanoid" id="P55987"/>
<dbReference type="OrthoDB" id="9803053at2"/>
<dbReference type="PhylomeDB" id="P55987"/>
<dbReference type="Proteomes" id="UP000000429">
    <property type="component" value="Chromosome"/>
</dbReference>
<dbReference type="GO" id="GO:0005886">
    <property type="term" value="C:plasma membrane"/>
    <property type="evidence" value="ECO:0007669"/>
    <property type="project" value="UniProtKB-SubCell"/>
</dbReference>
<dbReference type="GO" id="GO:0045259">
    <property type="term" value="C:proton-transporting ATP synthase complex"/>
    <property type="evidence" value="ECO:0007669"/>
    <property type="project" value="UniProtKB-KW"/>
</dbReference>
<dbReference type="GO" id="GO:0043531">
    <property type="term" value="F:ADP binding"/>
    <property type="evidence" value="ECO:0000318"/>
    <property type="project" value="GO_Central"/>
</dbReference>
<dbReference type="GO" id="GO:0005524">
    <property type="term" value="F:ATP binding"/>
    <property type="evidence" value="ECO:0000318"/>
    <property type="project" value="GO_Central"/>
</dbReference>
<dbReference type="GO" id="GO:0046933">
    <property type="term" value="F:proton-transporting ATP synthase activity, rotational mechanism"/>
    <property type="evidence" value="ECO:0007669"/>
    <property type="project" value="UniProtKB-UniRule"/>
</dbReference>
<dbReference type="GO" id="GO:0015986">
    <property type="term" value="P:proton motive force-driven ATP synthesis"/>
    <property type="evidence" value="ECO:0000318"/>
    <property type="project" value="GO_Central"/>
</dbReference>
<dbReference type="CDD" id="cd18113">
    <property type="entry name" value="ATP-synt_F1_alpha_C"/>
    <property type="match status" value="1"/>
</dbReference>
<dbReference type="CDD" id="cd18116">
    <property type="entry name" value="ATP-synt_F1_alpha_N"/>
    <property type="match status" value="1"/>
</dbReference>
<dbReference type="CDD" id="cd01132">
    <property type="entry name" value="F1-ATPase_alpha_CD"/>
    <property type="match status" value="1"/>
</dbReference>
<dbReference type="FunFam" id="1.20.150.20:FF:000001">
    <property type="entry name" value="ATP synthase subunit alpha"/>
    <property type="match status" value="1"/>
</dbReference>
<dbReference type="FunFam" id="3.40.50.300:FF:000002">
    <property type="entry name" value="ATP synthase subunit alpha"/>
    <property type="match status" value="1"/>
</dbReference>
<dbReference type="Gene3D" id="2.40.30.20">
    <property type="match status" value="1"/>
</dbReference>
<dbReference type="Gene3D" id="1.20.150.20">
    <property type="entry name" value="ATP synthase alpha/beta chain, C-terminal domain"/>
    <property type="match status" value="1"/>
</dbReference>
<dbReference type="Gene3D" id="3.40.50.300">
    <property type="entry name" value="P-loop containing nucleotide triphosphate hydrolases"/>
    <property type="match status" value="1"/>
</dbReference>
<dbReference type="HAMAP" id="MF_01346">
    <property type="entry name" value="ATP_synth_alpha_bact"/>
    <property type="match status" value="1"/>
</dbReference>
<dbReference type="InterPro" id="IPR023366">
    <property type="entry name" value="ATP_synth_asu-like_sf"/>
</dbReference>
<dbReference type="InterPro" id="IPR000793">
    <property type="entry name" value="ATP_synth_asu_C"/>
</dbReference>
<dbReference type="InterPro" id="IPR038376">
    <property type="entry name" value="ATP_synth_asu_C_sf"/>
</dbReference>
<dbReference type="InterPro" id="IPR033732">
    <property type="entry name" value="ATP_synth_F1_a_nt-bd_dom"/>
</dbReference>
<dbReference type="InterPro" id="IPR005294">
    <property type="entry name" value="ATP_synth_F1_asu"/>
</dbReference>
<dbReference type="InterPro" id="IPR020003">
    <property type="entry name" value="ATPase_a/bsu_AS"/>
</dbReference>
<dbReference type="InterPro" id="IPR004100">
    <property type="entry name" value="ATPase_F1/V1/A1_a/bsu_N"/>
</dbReference>
<dbReference type="InterPro" id="IPR036121">
    <property type="entry name" value="ATPase_F1/V1/A1_a/bsu_N_sf"/>
</dbReference>
<dbReference type="InterPro" id="IPR000194">
    <property type="entry name" value="ATPase_F1/V1/A1_a/bsu_nucl-bd"/>
</dbReference>
<dbReference type="InterPro" id="IPR027417">
    <property type="entry name" value="P-loop_NTPase"/>
</dbReference>
<dbReference type="NCBIfam" id="TIGR00962">
    <property type="entry name" value="atpA"/>
    <property type="match status" value="1"/>
</dbReference>
<dbReference type="NCBIfam" id="NF009884">
    <property type="entry name" value="PRK13343.1"/>
    <property type="match status" value="1"/>
</dbReference>
<dbReference type="PANTHER" id="PTHR48082">
    <property type="entry name" value="ATP SYNTHASE SUBUNIT ALPHA, MITOCHONDRIAL"/>
    <property type="match status" value="1"/>
</dbReference>
<dbReference type="PANTHER" id="PTHR48082:SF2">
    <property type="entry name" value="ATP SYNTHASE SUBUNIT ALPHA, MITOCHONDRIAL"/>
    <property type="match status" value="1"/>
</dbReference>
<dbReference type="Pfam" id="PF00006">
    <property type="entry name" value="ATP-synt_ab"/>
    <property type="match status" value="1"/>
</dbReference>
<dbReference type="Pfam" id="PF00306">
    <property type="entry name" value="ATP-synt_ab_C"/>
    <property type="match status" value="1"/>
</dbReference>
<dbReference type="Pfam" id="PF02874">
    <property type="entry name" value="ATP-synt_ab_N"/>
    <property type="match status" value="1"/>
</dbReference>
<dbReference type="PIRSF" id="PIRSF039088">
    <property type="entry name" value="F_ATPase_subunit_alpha"/>
    <property type="match status" value="1"/>
</dbReference>
<dbReference type="SUPFAM" id="SSF47917">
    <property type="entry name" value="C-terminal domain of alpha and beta subunits of F1 ATP synthase"/>
    <property type="match status" value="1"/>
</dbReference>
<dbReference type="SUPFAM" id="SSF50615">
    <property type="entry name" value="N-terminal domain of alpha and beta subunits of F1 ATP synthase"/>
    <property type="match status" value="1"/>
</dbReference>
<dbReference type="SUPFAM" id="SSF52540">
    <property type="entry name" value="P-loop containing nucleoside triphosphate hydrolases"/>
    <property type="match status" value="1"/>
</dbReference>
<dbReference type="PROSITE" id="PS00152">
    <property type="entry name" value="ATPASE_ALPHA_BETA"/>
    <property type="match status" value="1"/>
</dbReference>